<proteinExistence type="inferred from homology"/>
<organism>
    <name type="scientific">Hypocrea jecorina</name>
    <name type="common">Trichoderma reesei</name>
    <dbReference type="NCBI Taxonomy" id="51453"/>
    <lineage>
        <taxon>Eukaryota</taxon>
        <taxon>Fungi</taxon>
        <taxon>Dikarya</taxon>
        <taxon>Ascomycota</taxon>
        <taxon>Pezizomycotina</taxon>
        <taxon>Sordariomycetes</taxon>
        <taxon>Hypocreomycetidae</taxon>
        <taxon>Hypocreales</taxon>
        <taxon>Hypocreaceae</taxon>
        <taxon>Trichoderma</taxon>
    </lineage>
</organism>
<gene>
    <name type="primary">HHT1</name>
</gene>
<dbReference type="EMBL" id="AF520775">
    <property type="protein sequence ID" value="AAM76068.1"/>
    <property type="molecule type" value="Genomic_DNA"/>
</dbReference>
<dbReference type="SMR" id="P61835"/>
<dbReference type="VEuPathDB" id="FungiDB:TrQ_008478"/>
<dbReference type="OMA" id="HIFAEMA"/>
<dbReference type="GO" id="GO:0000786">
    <property type="term" value="C:nucleosome"/>
    <property type="evidence" value="ECO:0007669"/>
    <property type="project" value="UniProtKB-KW"/>
</dbReference>
<dbReference type="GO" id="GO:0005634">
    <property type="term" value="C:nucleus"/>
    <property type="evidence" value="ECO:0007669"/>
    <property type="project" value="UniProtKB-SubCell"/>
</dbReference>
<dbReference type="GO" id="GO:0003677">
    <property type="term" value="F:DNA binding"/>
    <property type="evidence" value="ECO:0007669"/>
    <property type="project" value="UniProtKB-KW"/>
</dbReference>
<dbReference type="GO" id="GO:0046982">
    <property type="term" value="F:protein heterodimerization activity"/>
    <property type="evidence" value="ECO:0007669"/>
    <property type="project" value="InterPro"/>
</dbReference>
<dbReference type="GO" id="GO:0030527">
    <property type="term" value="F:structural constituent of chromatin"/>
    <property type="evidence" value="ECO:0007669"/>
    <property type="project" value="InterPro"/>
</dbReference>
<dbReference type="CDD" id="cd22911">
    <property type="entry name" value="HFD_H3"/>
    <property type="match status" value="1"/>
</dbReference>
<dbReference type="FunFam" id="1.10.20.10:FF:000010">
    <property type="entry name" value="Histone H3"/>
    <property type="match status" value="1"/>
</dbReference>
<dbReference type="Gene3D" id="1.10.20.10">
    <property type="entry name" value="Histone, subunit A"/>
    <property type="match status" value="1"/>
</dbReference>
<dbReference type="InterPro" id="IPR009072">
    <property type="entry name" value="Histone-fold"/>
</dbReference>
<dbReference type="InterPro" id="IPR007125">
    <property type="entry name" value="Histone_H2A/H2B/H3"/>
</dbReference>
<dbReference type="InterPro" id="IPR000164">
    <property type="entry name" value="Histone_H3/CENP-A"/>
</dbReference>
<dbReference type="PANTHER" id="PTHR11426">
    <property type="entry name" value="HISTONE H3"/>
    <property type="match status" value="1"/>
</dbReference>
<dbReference type="Pfam" id="PF00125">
    <property type="entry name" value="Histone"/>
    <property type="match status" value="1"/>
</dbReference>
<dbReference type="PRINTS" id="PR00622">
    <property type="entry name" value="HISTONEH3"/>
</dbReference>
<dbReference type="SMART" id="SM00428">
    <property type="entry name" value="H3"/>
    <property type="match status" value="1"/>
</dbReference>
<dbReference type="SUPFAM" id="SSF47113">
    <property type="entry name" value="Histone-fold"/>
    <property type="match status" value="1"/>
</dbReference>
<dbReference type="PROSITE" id="PS00322">
    <property type="entry name" value="HISTONE_H3_1"/>
    <property type="match status" value="1"/>
</dbReference>
<dbReference type="PROSITE" id="PS00959">
    <property type="entry name" value="HISTONE_H3_2"/>
    <property type="match status" value="1"/>
</dbReference>
<protein>
    <recommendedName>
        <fullName>Histone H3</fullName>
    </recommendedName>
</protein>
<keyword id="KW-0007">Acetylation</keyword>
<keyword id="KW-0158">Chromosome</keyword>
<keyword id="KW-0238">DNA-binding</keyword>
<keyword id="KW-0488">Methylation</keyword>
<keyword id="KW-0544">Nucleosome core</keyword>
<keyword id="KW-0539">Nucleus</keyword>
<keyword id="KW-0597">Phosphoprotein</keyword>
<sequence length="136" mass="15392">MARTKQTARKSTGGKAPRKQLASKAARKSAPSTGGVKKPHRYKPGTVALREIRRYQKSTELLIRKLPFQRLVREIAQDFKSDLRFQSSAIGALQESVESYLVSLFEDTNLCAIHAKRVTIQSKDIQLARRLRGERN</sequence>
<comment type="function">
    <text>Core component of nucleosome. Nucleosomes wrap and compact DNA into chromatin, limiting DNA accessibility to the cellular machineries which require DNA as a template. Histones thereby play a central role in transcription regulation, DNA repair, DNA replication and chromosomal stability. DNA accessibility is regulated via a complex set of post-translational modifications of histones, also called histone code, and nucleosome remodeling.</text>
</comment>
<comment type="subunit">
    <text>The nucleosome is a histone octamer containing two molecules each of H2A, H2B, H3 and H4 assembled in one H3-H4 heterotetramer and two H2A-H2B heterodimers. The octamer wraps approximately 147 bp of DNA.</text>
</comment>
<comment type="subcellular location">
    <subcellularLocation>
        <location evidence="1">Nucleus</location>
    </subcellularLocation>
    <subcellularLocation>
        <location evidence="1">Chromosome</location>
    </subcellularLocation>
</comment>
<comment type="PTM">
    <text evidence="1">Phosphorylated to form H3S10ph. H3S10ph promotes subsequent H3K14ac formation and is required for transcriptional activation through TBP recruitment to the promoters (By similarity).</text>
</comment>
<comment type="PTM">
    <text evidence="1">Mono-, di- and trimethylated by the COMPASS complex to form H3K4me1/2/3. H3K4me activates gene expression by regulating transcription elongation and plays a role in telomere length maintenance. H3K4me enrichment correlates with transcription levels, and occurs in a 5' to 3' gradient with H3K4me3 enrichment at the 5'-end of genes, shifting to H3K4me2 and then H3K4me1. Methylated by SET2 to form H3K36me. H3K36me represses gene expression. Methylated by DOT1 to form H3K79me. H3K79me is required for association of SIR proteins with telomeric regions and for telomeric silencing. The COMPASS-mediated formation of H3K4me2/3 and the DOT1-mediated formation of H3K79me require H2BK123ub1 (By similarity).</text>
</comment>
<comment type="PTM">
    <text evidence="1">Acetylation of histone H3 leads to transcriptional activation. H3K14ac formation by GCN5 is promoted by H3S10ph. H3K14ac can also be formed by ESA1. H3K56ac formation occurs predominantly in newly synthesized H3 molecules during G1, S and G2/M of the cell cycle and may be involved in DNA repair (By similarity).</text>
</comment>
<comment type="similarity">
    <text evidence="3">Belongs to the histone H3 family.</text>
</comment>
<comment type="caution">
    <text evidence="3">To ensure consistency between histone entries, we follow the 'Brno' nomenclature for histone modifications, with positions referring to those used in the literature for the 'closest' model organism. Due to slight variations in histone sequences between organisms and to the presence of initiator methionine in UniProtKB/Swiss-Prot sequences, the actual positions of modified amino acids in the sequence generally differ. In this entry the following conventions are used: H3K4me1/2/3 = mono-, di- and trimethylated Lys-5; H3K9ac = acetylated Lys-10; H3K9me1 = monomethylated Lys-10; H3S10ph = phosphorylated Ser-11; H3K14ac = acetylated Lys-15; H3K14me2 = dimethylated Lys-15; H3K18ac = acetylated Lys-19; H3K18me1 = monomethylated Lys-19; H3K23ac = acetylated Lys-24; H3K23me1 = monomethylated Lys-24; H3K27ac = acetylated Lys-28; H3K27me1/2/3 = mono-, di- and trimethylated Lys-28; H3K36ac = acetylated Lys-37; H3K36me1/2/3 = mono-, di- and trimethylated Lys-37; H3K56ac = acetylated Lys-57; H3K64ac = acetylated Lys-65; H3K79me1/2/3 = mono-, di- and trimethylated Lys-80.</text>
</comment>
<accession>P61835</accession>
<evidence type="ECO:0000250" key="1"/>
<evidence type="ECO:0000256" key="2">
    <source>
        <dbReference type="SAM" id="MobiDB-lite"/>
    </source>
</evidence>
<evidence type="ECO:0000305" key="3"/>
<reference key="1">
    <citation type="journal article" date="2003" name="Fungal Genet. Biol.">
        <title>The Snf1 kinase of the filamentous fungus Hypocrea jecorina phosphorylates regulation-relevant serine residues in the yeast carbon catabolite repressor Mig1 but not in the filamentous fungal counterpart Cre1.</title>
        <authorList>
            <person name="Cziferszky A."/>
            <person name="Seiboth B."/>
            <person name="Kubicek C.P."/>
        </authorList>
    </citation>
    <scope>NUCLEOTIDE SEQUENCE [GENOMIC DNA]</scope>
    <source>
        <strain>ATCC 26921 / CBS 392.92 / QM9414</strain>
    </source>
</reference>
<name>H3_HYPJE</name>
<feature type="initiator methionine" description="Removed" evidence="1">
    <location>
        <position position="1"/>
    </location>
</feature>
<feature type="chain" id="PRO_0000221369" description="Histone H3">
    <location>
        <begin position="2"/>
        <end position="136"/>
    </location>
</feature>
<feature type="region of interest" description="Disordered" evidence="2">
    <location>
        <begin position="1"/>
        <end position="43"/>
    </location>
</feature>
<feature type="modified residue" description="N6,N6,N6-trimethyllysine; alternate" evidence="1">
    <location>
        <position position="5"/>
    </location>
</feature>
<feature type="modified residue" description="N6,N6-dimethyllysine; alternate" evidence="1">
    <location>
        <position position="5"/>
    </location>
</feature>
<feature type="modified residue" description="N6-methyllysine; alternate" evidence="1">
    <location>
        <position position="5"/>
    </location>
</feature>
<feature type="modified residue" description="N6-acetyllysine; alternate" evidence="1">
    <location>
        <position position="10"/>
    </location>
</feature>
<feature type="modified residue" description="N6-methyllysine; alternate" evidence="1">
    <location>
        <position position="10"/>
    </location>
</feature>
<feature type="modified residue" description="Phosphoserine" evidence="1">
    <location>
        <position position="11"/>
    </location>
</feature>
<feature type="modified residue" description="N6,N6-dimethyllysine; alternate" evidence="1">
    <location>
        <position position="15"/>
    </location>
</feature>
<feature type="modified residue" description="N6-acetyllysine; alternate" evidence="1">
    <location>
        <position position="15"/>
    </location>
</feature>
<feature type="modified residue" description="N6-methyllysine; alternate" evidence="1">
    <location>
        <position position="15"/>
    </location>
</feature>
<feature type="modified residue" description="N6-acetyllysine; alternate" evidence="1">
    <location>
        <position position="19"/>
    </location>
</feature>
<feature type="modified residue" description="N6-methyllysine; alternate" evidence="1">
    <location>
        <position position="19"/>
    </location>
</feature>
<feature type="modified residue" description="N6-acetyllysine; alternate" evidence="1">
    <location>
        <position position="24"/>
    </location>
</feature>
<feature type="modified residue" description="N6-methyllysine; alternate" evidence="1">
    <location>
        <position position="24"/>
    </location>
</feature>
<feature type="modified residue" description="N6,N6,N6-trimethyllysine; alternate" evidence="1">
    <location>
        <position position="28"/>
    </location>
</feature>
<feature type="modified residue" description="N6,N6-dimethyllysine; alternate" evidence="1">
    <location>
        <position position="28"/>
    </location>
</feature>
<feature type="modified residue" description="N6-acetyllysine; alternate" evidence="1">
    <location>
        <position position="28"/>
    </location>
</feature>
<feature type="modified residue" description="N6-methyllysine; alternate" evidence="1">
    <location>
        <position position="28"/>
    </location>
</feature>
<feature type="modified residue" description="N6,N6,N6-trimethyllysine; alternate" evidence="1">
    <location>
        <position position="37"/>
    </location>
</feature>
<feature type="modified residue" description="N6,N6-dimethyllysine; alternate" evidence="1">
    <location>
        <position position="37"/>
    </location>
</feature>
<feature type="modified residue" description="N6-acetyllysine; alternate" evidence="1">
    <location>
        <position position="37"/>
    </location>
</feature>
<feature type="modified residue" description="N6-methyllysine; alternate" evidence="1">
    <location>
        <position position="37"/>
    </location>
</feature>
<feature type="modified residue" description="N6-acetyllysine" evidence="1">
    <location>
        <position position="57"/>
    </location>
</feature>
<feature type="modified residue" description="N6-acetyllysine" evidence="1">
    <location>
        <position position="65"/>
    </location>
</feature>
<feature type="modified residue" description="N6,N6,N6-trimethyllysine; alternate" evidence="1">
    <location>
        <position position="80"/>
    </location>
</feature>
<feature type="modified residue" description="N6,N6-dimethyllysine; alternate" evidence="1">
    <location>
        <position position="80"/>
    </location>
</feature>
<feature type="modified residue" description="N6-methyllysine; alternate" evidence="1">
    <location>
        <position position="80"/>
    </location>
</feature>